<comment type="function">
    <text evidence="1">Peptide chain release factor 2 directs the termination of translation in response to the peptide chain termination codons UGA and UAA.</text>
</comment>
<comment type="subcellular location">
    <subcellularLocation>
        <location evidence="1">Cytoplasm</location>
    </subcellularLocation>
</comment>
<comment type="PTM">
    <text evidence="1">Methylated by PrmC. Methylation increases the termination efficiency of RF2.</text>
</comment>
<comment type="similarity">
    <text evidence="1">Belongs to the prokaryotic/mitochondrial release factor family.</text>
</comment>
<dbReference type="EMBL" id="AL111168">
    <property type="protein sequence ID" value="CAL35563.1"/>
    <property type="molecule type" value="Genomic_DNA"/>
</dbReference>
<dbReference type="PIR" id="F81291">
    <property type="entry name" value="F81291"/>
</dbReference>
<dbReference type="RefSeq" id="WP_002851475.1">
    <property type="nucleotide sequence ID" value="NZ_SZUC01000003.1"/>
</dbReference>
<dbReference type="RefSeq" id="YP_002344837.1">
    <property type="nucleotide sequence ID" value="NC_002163.1"/>
</dbReference>
<dbReference type="SMR" id="Q9PMK5"/>
<dbReference type="IntAct" id="Q9PMK5">
    <property type="interactions" value="8"/>
</dbReference>
<dbReference type="STRING" id="192222.Cj1455"/>
<dbReference type="PaxDb" id="192222-Cj1455"/>
<dbReference type="EnsemblBacteria" id="CAL35563">
    <property type="protein sequence ID" value="CAL35563"/>
    <property type="gene ID" value="Cj1455"/>
</dbReference>
<dbReference type="GeneID" id="905743"/>
<dbReference type="KEGG" id="cje:Cj1455"/>
<dbReference type="PATRIC" id="fig|192222.6.peg.1435"/>
<dbReference type="eggNOG" id="COG1186">
    <property type="taxonomic scope" value="Bacteria"/>
</dbReference>
<dbReference type="HOGENOM" id="CLU_036856_6_0_7"/>
<dbReference type="OrthoDB" id="9806673at2"/>
<dbReference type="Proteomes" id="UP000000799">
    <property type="component" value="Chromosome"/>
</dbReference>
<dbReference type="GO" id="GO:0005737">
    <property type="term" value="C:cytoplasm"/>
    <property type="evidence" value="ECO:0007669"/>
    <property type="project" value="UniProtKB-SubCell"/>
</dbReference>
<dbReference type="GO" id="GO:0016149">
    <property type="term" value="F:translation release factor activity, codon specific"/>
    <property type="evidence" value="ECO:0007669"/>
    <property type="project" value="UniProtKB-UniRule"/>
</dbReference>
<dbReference type="FunFam" id="3.30.160.20:FF:000010">
    <property type="entry name" value="Peptide chain release factor 2"/>
    <property type="match status" value="1"/>
</dbReference>
<dbReference type="Gene3D" id="3.30.160.20">
    <property type="match status" value="1"/>
</dbReference>
<dbReference type="Gene3D" id="3.30.70.1660">
    <property type="match status" value="1"/>
</dbReference>
<dbReference type="Gene3D" id="1.20.58.410">
    <property type="entry name" value="Release factor"/>
    <property type="match status" value="1"/>
</dbReference>
<dbReference type="HAMAP" id="MF_00094">
    <property type="entry name" value="Rel_fac_2"/>
    <property type="match status" value="1"/>
</dbReference>
<dbReference type="InterPro" id="IPR005139">
    <property type="entry name" value="PCRF"/>
</dbReference>
<dbReference type="InterPro" id="IPR000352">
    <property type="entry name" value="Pep_chain_release_fac_I"/>
</dbReference>
<dbReference type="InterPro" id="IPR045853">
    <property type="entry name" value="Pep_chain_release_fac_I_sf"/>
</dbReference>
<dbReference type="InterPro" id="IPR004374">
    <property type="entry name" value="PrfB"/>
</dbReference>
<dbReference type="NCBIfam" id="TIGR00020">
    <property type="entry name" value="prfB"/>
    <property type="match status" value="1"/>
</dbReference>
<dbReference type="PANTHER" id="PTHR43116:SF3">
    <property type="entry name" value="CLASS I PEPTIDE CHAIN RELEASE FACTOR"/>
    <property type="match status" value="1"/>
</dbReference>
<dbReference type="PANTHER" id="PTHR43116">
    <property type="entry name" value="PEPTIDE CHAIN RELEASE FACTOR 2"/>
    <property type="match status" value="1"/>
</dbReference>
<dbReference type="Pfam" id="PF03462">
    <property type="entry name" value="PCRF"/>
    <property type="match status" value="1"/>
</dbReference>
<dbReference type="Pfam" id="PF00472">
    <property type="entry name" value="RF-1"/>
    <property type="match status" value="1"/>
</dbReference>
<dbReference type="SMART" id="SM00937">
    <property type="entry name" value="PCRF"/>
    <property type="match status" value="1"/>
</dbReference>
<dbReference type="SUPFAM" id="SSF75620">
    <property type="entry name" value="Release factor"/>
    <property type="match status" value="1"/>
</dbReference>
<dbReference type="PROSITE" id="PS00745">
    <property type="entry name" value="RF_PROK_I"/>
    <property type="match status" value="1"/>
</dbReference>
<organism>
    <name type="scientific">Campylobacter jejuni subsp. jejuni serotype O:2 (strain ATCC 700819 / NCTC 11168)</name>
    <dbReference type="NCBI Taxonomy" id="192222"/>
    <lineage>
        <taxon>Bacteria</taxon>
        <taxon>Pseudomonadati</taxon>
        <taxon>Campylobacterota</taxon>
        <taxon>Epsilonproteobacteria</taxon>
        <taxon>Campylobacterales</taxon>
        <taxon>Campylobacteraceae</taxon>
        <taxon>Campylobacter</taxon>
    </lineage>
</organism>
<feature type="chain" id="PRO_0000166808" description="Peptide chain release factor 2">
    <location>
        <begin position="1"/>
        <end position="365"/>
    </location>
</feature>
<feature type="modified residue" description="N5-methylglutamine" evidence="1">
    <location>
        <position position="251"/>
    </location>
</feature>
<gene>
    <name evidence="1" type="primary">prfB</name>
    <name type="ordered locus">Cj1455</name>
</gene>
<sequence length="365" mass="41068">MDNYEFSELLKTLKNKVGNIASIIKPENIQTRLKEIEELENSPSFWSDVKQAGIIGKEKTKITNLLKNYENAFNALNDASELFDLANSENDTETLEALFNDAPKLEDTITSLEISMLLSGENDGKNAIVSIHPGAGGTESNDWASILYRMYLRFCEREGFKVETLDFQEGEEAGLKDVSFLVKGENAYGYLKAENGIHRLVRTSPFDSAGRRHTSFSSVMVSPELDDDIEIEIEEKDIRIDYYRASGAGGQHVNKTESAVRITHFPTGIVVQCQNDRSQHKNKATAFKMLKSRLYELELMKQQDSANTGEKSEIGWGHQIRSYVLFPYQQVKDNRSGEAFSQVDNILDGDIKKMIEGVLIALKAE</sequence>
<keyword id="KW-0963">Cytoplasm</keyword>
<keyword id="KW-0488">Methylation</keyword>
<keyword id="KW-0648">Protein biosynthesis</keyword>
<keyword id="KW-1185">Reference proteome</keyword>
<evidence type="ECO:0000255" key="1">
    <source>
        <dbReference type="HAMAP-Rule" id="MF_00094"/>
    </source>
</evidence>
<reference key="1">
    <citation type="journal article" date="2000" name="Nature">
        <title>The genome sequence of the food-borne pathogen Campylobacter jejuni reveals hypervariable sequences.</title>
        <authorList>
            <person name="Parkhill J."/>
            <person name="Wren B.W."/>
            <person name="Mungall K.L."/>
            <person name="Ketley J.M."/>
            <person name="Churcher C.M."/>
            <person name="Basham D."/>
            <person name="Chillingworth T."/>
            <person name="Davies R.M."/>
            <person name="Feltwell T."/>
            <person name="Holroyd S."/>
            <person name="Jagels K."/>
            <person name="Karlyshev A.V."/>
            <person name="Moule S."/>
            <person name="Pallen M.J."/>
            <person name="Penn C.W."/>
            <person name="Quail M.A."/>
            <person name="Rajandream M.A."/>
            <person name="Rutherford K.M."/>
            <person name="van Vliet A.H.M."/>
            <person name="Whitehead S."/>
            <person name="Barrell B.G."/>
        </authorList>
    </citation>
    <scope>NUCLEOTIDE SEQUENCE [LARGE SCALE GENOMIC DNA]</scope>
    <source>
        <strain>ATCC 700819 / NCTC 11168</strain>
    </source>
</reference>
<name>RF2_CAMJE</name>
<accession>Q9PMK5</accession>
<accession>Q0P8G0</accession>
<proteinExistence type="inferred from homology"/>
<protein>
    <recommendedName>
        <fullName evidence="1">Peptide chain release factor 2</fullName>
        <shortName evidence="1">RF-2</shortName>
    </recommendedName>
</protein>